<keyword id="KW-0002">3D-structure</keyword>
<keyword id="KW-0025">Alternative splicing</keyword>
<keyword id="KW-0084">Basement membrane</keyword>
<keyword id="KW-0965">Cell junction</keyword>
<keyword id="KW-0176">Collagen</keyword>
<keyword id="KW-0903">Direct protein sequencing</keyword>
<keyword id="KW-0225">Disease variant</keyword>
<keyword id="KW-1015">Disulfide bond</keyword>
<keyword id="KW-0263">Epidermolysis bullosa</keyword>
<keyword id="KW-0272">Extracellular matrix</keyword>
<keyword id="KW-0325">Glycoprotein</keyword>
<keyword id="KW-0379">Hydroxylation</keyword>
<keyword id="KW-0472">Membrane</keyword>
<keyword id="KW-0597">Phosphoprotein</keyword>
<keyword id="KW-1267">Proteomics identification</keyword>
<keyword id="KW-1185">Reference proteome</keyword>
<keyword id="KW-0677">Repeat</keyword>
<keyword id="KW-0964">Secreted</keyword>
<keyword id="KW-0735">Signal-anchor</keyword>
<keyword id="KW-0812">Transmembrane</keyword>
<keyword id="KW-1133">Transmembrane helix</keyword>
<reference key="1">
    <citation type="journal article" date="1992" name="J. Invest. Dermatol.">
        <title>Cloning and primary structural analysis of the bullous pemphigoid autoantigen, BP180.</title>
        <authorList>
            <person name="Giudice G.J."/>
            <person name="Emery D.J."/>
            <person name="Diaz L.A."/>
        </authorList>
    </citation>
    <scope>NUCLEOTIDE SEQUENCE [MRNA] (ISOFORM 1)</scope>
    <scope>SUBCELLULAR LOCATION</scope>
    <scope>VARIANT SER-428</scope>
    <source>
        <tissue>Foreskin</tissue>
    </source>
</reference>
<reference key="2">
    <citation type="journal article" date="1997" name="Am. J. Hum. Genet.">
        <title>Cloning of the human type XVII collagen gene (COL17A1), and detection of novel mutations in generalized atrophic benign epidermolysis bullosa.</title>
        <authorList>
            <person name="Gatalica B."/>
            <person name="Pulkkinen L."/>
            <person name="Li K."/>
            <person name="Kuokkanen K."/>
            <person name="Ryynaenen M."/>
            <person name="McGrath J.A."/>
            <person name="Uitto J."/>
        </authorList>
    </citation>
    <scope>NUCLEOTIDE SEQUENCE [GENOMIC DNA] (ISOFORM 1)</scope>
    <scope>VARIANTS ILE-231; THR-238; SER-428; VAL-703 AND GLY-1370</scope>
</reference>
<reference key="3">
    <citation type="journal article" date="2004" name="Nature">
        <title>The DNA sequence and comparative analysis of human chromosome 10.</title>
        <authorList>
            <person name="Deloukas P."/>
            <person name="Earthrowl M.E."/>
            <person name="Grafham D.V."/>
            <person name="Rubenfield M."/>
            <person name="French L."/>
            <person name="Steward C.A."/>
            <person name="Sims S.K."/>
            <person name="Jones M.C."/>
            <person name="Searle S."/>
            <person name="Scott C."/>
            <person name="Howe K."/>
            <person name="Hunt S.E."/>
            <person name="Andrews T.D."/>
            <person name="Gilbert J.G.R."/>
            <person name="Swarbreck D."/>
            <person name="Ashurst J.L."/>
            <person name="Taylor A."/>
            <person name="Battles J."/>
            <person name="Bird C.P."/>
            <person name="Ainscough R."/>
            <person name="Almeida J.P."/>
            <person name="Ashwell R.I.S."/>
            <person name="Ambrose K.D."/>
            <person name="Babbage A.K."/>
            <person name="Bagguley C.L."/>
            <person name="Bailey J."/>
            <person name="Banerjee R."/>
            <person name="Bates K."/>
            <person name="Beasley H."/>
            <person name="Bray-Allen S."/>
            <person name="Brown A.J."/>
            <person name="Brown J.Y."/>
            <person name="Burford D.C."/>
            <person name="Burrill W."/>
            <person name="Burton J."/>
            <person name="Cahill P."/>
            <person name="Camire D."/>
            <person name="Carter N.P."/>
            <person name="Chapman J.C."/>
            <person name="Clark S.Y."/>
            <person name="Clarke G."/>
            <person name="Clee C.M."/>
            <person name="Clegg S."/>
            <person name="Corby N."/>
            <person name="Coulson A."/>
            <person name="Dhami P."/>
            <person name="Dutta I."/>
            <person name="Dunn M."/>
            <person name="Faulkner L."/>
            <person name="Frankish A."/>
            <person name="Frankland J.A."/>
            <person name="Garner P."/>
            <person name="Garnett J."/>
            <person name="Gribble S."/>
            <person name="Griffiths C."/>
            <person name="Grocock R."/>
            <person name="Gustafson E."/>
            <person name="Hammond S."/>
            <person name="Harley J.L."/>
            <person name="Hart E."/>
            <person name="Heath P.D."/>
            <person name="Ho T.P."/>
            <person name="Hopkins B."/>
            <person name="Horne J."/>
            <person name="Howden P.J."/>
            <person name="Huckle E."/>
            <person name="Hynds C."/>
            <person name="Johnson C."/>
            <person name="Johnson D."/>
            <person name="Kana A."/>
            <person name="Kay M."/>
            <person name="Kimberley A.M."/>
            <person name="Kershaw J.K."/>
            <person name="Kokkinaki M."/>
            <person name="Laird G.K."/>
            <person name="Lawlor S."/>
            <person name="Lee H.M."/>
            <person name="Leongamornlert D.A."/>
            <person name="Laird G."/>
            <person name="Lloyd C."/>
            <person name="Lloyd D.M."/>
            <person name="Loveland J."/>
            <person name="Lovell J."/>
            <person name="McLaren S."/>
            <person name="McLay K.E."/>
            <person name="McMurray A."/>
            <person name="Mashreghi-Mohammadi M."/>
            <person name="Matthews L."/>
            <person name="Milne S."/>
            <person name="Nickerson T."/>
            <person name="Nguyen M."/>
            <person name="Overton-Larty E."/>
            <person name="Palmer S.A."/>
            <person name="Pearce A.V."/>
            <person name="Peck A.I."/>
            <person name="Pelan S."/>
            <person name="Phillimore B."/>
            <person name="Porter K."/>
            <person name="Rice C.M."/>
            <person name="Rogosin A."/>
            <person name="Ross M.T."/>
            <person name="Sarafidou T."/>
            <person name="Sehra H.K."/>
            <person name="Shownkeen R."/>
            <person name="Skuce C.D."/>
            <person name="Smith M."/>
            <person name="Standring L."/>
            <person name="Sycamore N."/>
            <person name="Tester J."/>
            <person name="Thorpe A."/>
            <person name="Torcasso W."/>
            <person name="Tracey A."/>
            <person name="Tromans A."/>
            <person name="Tsolas J."/>
            <person name="Wall M."/>
            <person name="Walsh J."/>
            <person name="Wang H."/>
            <person name="Weinstock K."/>
            <person name="West A.P."/>
            <person name="Willey D.L."/>
            <person name="Whitehead S.L."/>
            <person name="Wilming L."/>
            <person name="Wray P.W."/>
            <person name="Young L."/>
            <person name="Chen Y."/>
            <person name="Lovering R.C."/>
            <person name="Moschonas N.K."/>
            <person name="Siebert R."/>
            <person name="Fechtel K."/>
            <person name="Bentley D."/>
            <person name="Durbin R.M."/>
            <person name="Hubbard T."/>
            <person name="Doucette-Stamm L."/>
            <person name="Beck S."/>
            <person name="Smith D.R."/>
            <person name="Rogers J."/>
        </authorList>
    </citation>
    <scope>NUCLEOTIDE SEQUENCE [LARGE SCALE GENOMIC DNA]</scope>
</reference>
<reference key="4">
    <citation type="journal article" date="2004" name="Genome Res.">
        <title>The status, quality, and expansion of the NIH full-length cDNA project: the Mammalian Gene Collection (MGC).</title>
        <authorList>
            <consortium name="The MGC Project Team"/>
        </authorList>
    </citation>
    <scope>NUCLEOTIDE SEQUENCE [LARGE SCALE MRNA] OF 1-390</scope>
    <scope>VARIANT MET-210</scope>
    <source>
        <tissue>Pancreas</tissue>
    </source>
</reference>
<reference key="5">
    <citation type="journal article" date="1991" name="J. Biol. Chem.">
        <title>Genomic organization of collagenous domains and chromosomal assignment of human 180-kDa bullous pemphigoid antigen-2, a novel collagen of stratified squamous epithelium.</title>
        <authorList>
            <person name="Li K.H."/>
            <person name="Sawamura D."/>
            <person name="Giudice G.J."/>
            <person name="Diaz L.A."/>
            <person name="Mattei M.-G."/>
            <person name="Chu M.-L."/>
            <person name="Uitto J."/>
        </authorList>
    </citation>
    <scope>NUCLEOTIDE SEQUENCE [MRNA] OF 508-856</scope>
    <scope>TISSUE SPECIFICITY</scope>
</reference>
<reference key="6">
    <citation type="journal article" date="2003" name="J. Invest. Dermatol.">
        <title>The 97-kDa (LABD97) and 120-kDa (LAD-1) fragments of bullous pemphigoid antigen 180/type XVII collagen have different N-termini.</title>
        <authorList>
            <person name="Hirako Y."/>
            <person name="Nishizawa Y."/>
            <person name="Sitaru C."/>
            <person name="Opitz A."/>
            <person name="Marcus K."/>
            <person name="Meyer H.E."/>
            <person name="Butt E."/>
            <person name="Owaribe K."/>
            <person name="Zillikens D."/>
        </authorList>
    </citation>
    <scope>PROTEIN SEQUENCE OF 524-535</scope>
</reference>
<reference key="7">
    <citation type="journal article" date="1998" name="J. Invest. Dermatol.">
        <title>The 97 kDa linear IgA bullous disease antigen is identical to a portion of the extracellular domain of the 180 kDa bullous pemphigoid antigen, BPAg2.</title>
        <authorList>
            <person name="Zone J.J."/>
            <person name="Taylor T.B."/>
            <person name="Meyer L.J."/>
            <person name="Petersen M.J."/>
        </authorList>
    </citation>
    <scope>PROTEIN SEQUENCE OF 531-546; 554-565; 585-605; 647-666; 680-688; 689-703; 755-765; 842-860; 880-891; 1016-1028; 1062-1069; 1102-1108; 1134-1142; 1227-1247 AND 1248-1260</scope>
</reference>
<reference key="8">
    <citation type="journal article" date="1996" name="J. Invest. Dermatol.">
        <title>LAD-1, the linear IgA bullous dermatosis autoantigen, is a novel 120-kDa anchoring filament protein synthesized by epidermal cells.</title>
        <authorList>
            <person name="Marinkovich M.P."/>
            <person name="Taylor T.B."/>
            <person name="Keene D.R."/>
            <person name="Burgeson R.E."/>
            <person name="Zone J.J."/>
        </authorList>
    </citation>
    <scope>SUBCELLULAR LOCATION</scope>
    <scope>FUNCTION</scope>
    <scope>TISSUE SPECIFICITY</scope>
</reference>
<reference key="9">
    <citation type="journal article" date="1996" name="J. Invest. Dermatol.">
        <authorList>
            <person name="Marinkovich M.P."/>
            <person name="Taylor T.B."/>
            <person name="Keene D.R."/>
            <person name="Burgeson R.E."/>
            <person name="Zone J.J."/>
        </authorList>
    </citation>
    <scope>ERRATUM OF PUBMED:8618013</scope>
</reference>
<reference key="10">
    <citation type="journal article" date="1996" name="J. Invest. Dermatol.">
        <title>97-kDa linear IgA bullous dermatosis (LAD) antigen localizes to the lamina lucida of the epidermal basement membrane.</title>
        <authorList>
            <person name="Ishiko A."/>
            <person name="Shimizu H."/>
            <person name="Masunaga T."/>
            <person name="Hashimoto T."/>
            <person name="Dmochowski M."/>
            <person name="Wojnarowska F."/>
            <person name="Bhogal B.S."/>
            <person name="Black M.M."/>
            <person name="Nishikawa T."/>
        </authorList>
    </citation>
    <scope>SUBCELLULAR LOCATION</scope>
</reference>
<reference key="11">
    <citation type="journal article" date="1996" name="J. Invest. Dermatol.">
        <title>Evidence that the 180-kD bullous pemphigoid antigen is a transmembrane collagen, type XVII, in a triple-helical conformation and in type II transmembrane topography.</title>
        <authorList>
            <person name="Limardo M."/>
            <person name="Arffman A."/>
            <person name="Aho S."/>
            <person name="Utto J."/>
        </authorList>
    </citation>
    <scope>SUBCELLULAR LOCATION</scope>
</reference>
<reference key="12">
    <citation type="journal article" date="1998" name="J. Biol. Chem.">
        <title>Two forms of collagen XVII in keratinocytes. A full-length transmembrane protein and a soluble ectodomain.</title>
        <authorList>
            <person name="Schaecke H."/>
            <person name="Schumann H."/>
            <person name="Hammami-Hauasli N."/>
            <person name="Raghunath M."/>
            <person name="Bruckner-Tuderman L."/>
        </authorList>
    </citation>
    <scope>SUBUNIT</scope>
    <scope>PROTEOLYTIC PROCESSING</scope>
    <scope>GLYCOSYLATION AT ASN-1421</scope>
    <scope>DOMAINS</scope>
</reference>
<reference key="13">
    <citation type="journal article" date="2000" name="Mol. Biol. Cell">
        <title>The N terminus of the transmembrane protein BP180 interacts with the N-terminal domain of BP230, thereby mediating keratin cytoskeleton anchorage to the cell surface at the site of the hemidesmosome.</title>
        <authorList>
            <person name="Hopkinson S.B."/>
            <person name="Jones J.C."/>
        </authorList>
    </citation>
    <scope>INTERACTION WITH DSP</scope>
</reference>
<reference key="14">
    <citation type="journal article" date="2002" name="EMBO J.">
        <title>Transmembrane collagen XVII, an epithelial adhesion protein, is shed from the cell surface by ADAMs.</title>
        <authorList>
            <person name="Franzke C.-W."/>
            <person name="Tasanen K."/>
            <person name="Schaecke H."/>
            <person name="Zhou Z."/>
            <person name="Tryggvason K."/>
            <person name="Mauch C."/>
            <person name="Zigrino P."/>
            <person name="Sunnarborg S."/>
            <person name="Lee D.C."/>
            <person name="Fahrenholz F."/>
            <person name="Bruckner-Tuderman L."/>
        </authorList>
    </citation>
    <scope>SHEDDING</scope>
</reference>
<reference key="15">
    <citation type="journal article" date="2003" name="J. Cell Sci.">
        <title>Analysis of the interactions between BP180, BP230, plectin and the integrin alpha6beta4 important for hemidesmosome assembly.</title>
        <authorList>
            <person name="Koster J."/>
            <person name="Geerts D."/>
            <person name="Favre B."/>
            <person name="Borradori L."/>
            <person name="Sonnenberg A."/>
        </authorList>
    </citation>
    <scope>FUNCTION</scope>
    <scope>INTERACTION WITH DSP; DST; ITGB4 AND PLEC</scope>
    <scope>SUBCELLULAR LOCATION</scope>
</reference>
<reference key="16">
    <citation type="journal article" date="2007" name="J. Biol. Chem.">
        <title>Extracellular phosphorylation of collagen XVII by ecto-casein kinase 2 inhibits ectodomain shedding.</title>
        <authorList>
            <person name="Zimina E.P."/>
            <person name="Fritsch A."/>
            <person name="Schermer B."/>
            <person name="Bakulina A.Y."/>
            <person name="Bashkurov M."/>
            <person name="Benzing T."/>
            <person name="Bruckner-Tuderman L."/>
        </authorList>
    </citation>
    <scope>PHOSPHORYLATION AT SER-544</scope>
</reference>
<reference key="17">
    <citation type="journal article" date="2011" name="BMC Syst. Biol.">
        <title>Initial characterization of the human central proteome.</title>
        <authorList>
            <person name="Burkard T.R."/>
            <person name="Planyavsky M."/>
            <person name="Kaupe I."/>
            <person name="Breitwieser F.P."/>
            <person name="Buerckstuemmer T."/>
            <person name="Bennett K.L."/>
            <person name="Superti-Furga G."/>
            <person name="Colinge J."/>
        </authorList>
    </citation>
    <scope>IDENTIFICATION BY MASS SPECTROMETRY [LARGE SCALE ANALYSIS]</scope>
</reference>
<reference key="18">
    <citation type="journal article" date="2015" name="Hum. Mutat.">
        <title>Mutations in collagen, type XVII, alpha 1 (COL17A1) cause epithelial recurrent erosion dystrophy (ERED).</title>
        <authorList>
            <person name="Jonsson F."/>
            <person name="Bystroem B."/>
            <person name="Davidson A.E."/>
            <person name="Backman L.J."/>
            <person name="Kellgren T.G."/>
            <person name="Tuft S.J."/>
            <person name="Koskela T."/>
            <person name="Ryden P."/>
            <person name="Sandgren O."/>
            <person name="Danielson P."/>
            <person name="Hardcastle A.J."/>
            <person name="Golovleva I."/>
        </authorList>
    </citation>
    <scope>TISSUE SPECIFICITY</scope>
    <scope>INVOLVEMENT IN ERED</scope>
    <scope>VARIANT ERED ILE-939</scope>
</reference>
<reference key="19">
    <citation type="journal article" date="1996" name="Am. J. Pathol.">
        <title>Compound heterozygosity for a dominant glycine substitution and a recessive internal duplication mutation in the type XVII collagen gene results in junctional epidermolysis bullosa and abnormal dentition.</title>
        <authorList>
            <person name="McGrath J.A."/>
            <person name="Gatalica B."/>
            <person name="Li K."/>
            <person name="Dunnill M.G.S."/>
            <person name="McMillan J.R."/>
            <person name="Christiano A.M."/>
            <person name="Eady R.A.J."/>
            <person name="Uitto J."/>
        </authorList>
    </citation>
    <scope>VARIANT JEB4 VAL-627</scope>
</reference>
<reference key="20">
    <citation type="journal article" date="1997" name="Am. J. Hum. Genet.">
        <title>Three novel homozygous point mutations and a new polymorphism in the COL17A1 gene: relation to biological and clinical phenotypes of junctional epidermolysis bullosa.</title>
        <authorList>
            <person name="Schumann H."/>
            <person name="Hammami-Hauasli N."/>
            <person name="Pulkkinen L."/>
            <person name="Mauviel A."/>
            <person name="Kuester W."/>
            <person name="Luethi U."/>
            <person name="Owaribe K."/>
            <person name="Uitto J."/>
            <person name="Bruckner-Tuderman L."/>
        </authorList>
    </citation>
    <scope>VARIANT JEB4 GLN-1303</scope>
</reference>
<reference key="21">
    <citation type="journal article" date="2000" name="J. Biol. Chem.">
        <title>Collagen XVII is destabilized by a glycine substitution mutation in the cell adhesion domain Col15.</title>
        <authorList>
            <person name="Tasanen K."/>
            <person name="Eble J.A."/>
            <person name="Aumailley M."/>
            <person name="Schumann H."/>
            <person name="Baetge J."/>
            <person name="Tu H."/>
            <person name="Bruckner P."/>
            <person name="Bruckner-Tuderman L."/>
        </authorList>
    </citation>
    <scope>VARIANT JEB4 VAL-627</scope>
</reference>
<reference key="22">
    <citation type="journal article" date="2000" name="J. Invest. Dermatol.">
        <title>Hemizygosity for a glycine substitution in collagen XVII: unfolding and degradation of the ectodomain.</title>
        <authorList>
            <person name="Tasanen K."/>
            <person name="Floeth M."/>
            <person name="Schumann H."/>
            <person name="Bruckner-Tuderman L."/>
        </authorList>
    </citation>
    <scope>VARIANT JEB4 ASP-633</scope>
</reference>
<reference key="23">
    <citation type="journal article" date="2002" name="J. Dermatol. Sci.">
        <title>A novel homozygous point mutation in the COL17A1 gene in a Chinese family with generalized atrophic benign epidermolysis bullosa.</title>
        <authorList>
            <person name="Wu Y."/>
            <person name="Li G."/>
            <person name="Zhu X."/>
        </authorList>
    </citation>
    <scope>VARIANT JEB4 CYS-265</scope>
    <scope>VARIANT ILE-231</scope>
</reference>
<comment type="function">
    <text>May play a role in the integrity of hemidesmosome and the attachment of basal keratinocytes to the underlying basement membrane.</text>
</comment>
<comment type="function">
    <text>The 120 kDa linear IgA disease antigen is an anchoring filament component involved in dermal-epidermal cohesion. Is the target of linear IgA bullous dermatosis autoantibodies.</text>
</comment>
<comment type="subunit">
    <text evidence="3 7 17">Homotrimers of alpha 1(XVII)chains. Interacts (via cytoplasmic region) with ITGB4 (via cytoplasmic region). Interacts (via cytoplasmic region) with DST isoform 3 (via N-terminus). Interacts (via N-terminus) with PLEC. Interacts (via cytoplasmic region) with DSP.</text>
</comment>
<comment type="interaction">
    <interactant intactId="EBI-2528742">
        <id>Q9UMD9</id>
    </interactant>
    <interactant intactId="EBI-747012">
        <id>Q9H0L4</id>
        <label>CSTF2T</label>
    </interactant>
    <organismsDiffer>false</organismsDiffer>
    <experiments>3</experiments>
</comment>
<comment type="interaction">
    <interactant intactId="EBI-2528742">
        <id>Q9UMD9</id>
    </interactant>
    <interactant intactId="EBI-741582">
        <id>O60568</id>
        <label>PLOD3</label>
    </interactant>
    <organismsDiffer>false</organismsDiffer>
    <experiments>3</experiments>
</comment>
<comment type="interaction">
    <interactant intactId="EBI-2528742">
        <id>Q9UMD9</id>
    </interactant>
    <interactant intactId="EBI-1045072">
        <id>Q96T60</id>
        <label>PNKP</label>
    </interactant>
    <organismsDiffer>false</organismsDiffer>
    <experiments>3</experiments>
</comment>
<comment type="interaction">
    <interactant intactId="EBI-2528742">
        <id>Q9UMD9</id>
    </interactant>
    <interactant intactId="EBI-2557649">
        <id>Q9Y3C6</id>
        <label>PPIL1</label>
    </interactant>
    <organismsDiffer>false</organismsDiffer>
    <experiments>3</experiments>
</comment>
<comment type="interaction">
    <interactant intactId="EBI-2528742">
        <id>Q9UMD9</id>
    </interactant>
    <interactant intactId="EBI-947187">
        <id>Q9UHD9</id>
        <label>UBQLN2</label>
    </interactant>
    <organismsDiffer>false</organismsDiffer>
    <experiments>3</experiments>
</comment>
<comment type="interaction">
    <interactant intactId="EBI-2528742">
        <id>Q9UMD9</id>
    </interactant>
    <interactant intactId="EBI-310886">
        <id>Q9P202</id>
        <label>WHRN</label>
    </interactant>
    <organismsDiffer>false</organismsDiffer>
    <experiments>3</experiments>
</comment>
<comment type="subcellular location">
    <subcellularLocation>
        <location>Cell junction</location>
        <location>Hemidesmosome</location>
    </subcellularLocation>
    <subcellularLocation>
        <location>Membrane</location>
        <topology>Single-pass type II membrane protein</topology>
    </subcellularLocation>
    <text>Localized along the plasma membrane of the hemidesmosome.</text>
</comment>
<comment type="subcellular location">
    <molecule>120 kDa linear IgA disease antigen</molecule>
    <subcellularLocation>
        <location>Secreted</location>
        <location>Extracellular space</location>
        <location>Extracellular matrix</location>
        <location>Basement membrane</location>
    </subcellularLocation>
    <text>Exclusively localized to anchoring filaments. Localized to the epidermal side of split skin.</text>
</comment>
<comment type="subcellular location">
    <molecule>97 kDa linear IgA disease antigen</molecule>
    <subcellularLocation>
        <location>Secreted</location>
        <location>Extracellular space</location>
        <location>Extracellular matrix</location>
        <location>Basement membrane</location>
    </subcellularLocation>
    <text>Localized in the lamina lucida beneath the hemidesmosomes.</text>
</comment>
<comment type="alternative products">
    <event type="alternative splicing"/>
    <isoform>
        <id>Q9UMD9-1</id>
        <name>1</name>
        <sequence type="displayed"/>
    </isoform>
    <isoform>
        <id>Q9UMD9-2</id>
        <name>2</name>
        <sequence type="described" ref="VSP_024940 VSP_024941"/>
    </isoform>
</comment>
<comment type="tissue specificity">
    <text evidence="10 12 13">Detected in skin (PubMed:8618013). In the cornea, it is detected in the epithelial basement membrane, the epithelial cells, and at a lower level in stromal cells (at protein level) (PubMed:25676728). Stratified squamous epithelia. Found in hemidesmosomes. Expressed in cornea, oral mucosa, esophagus, intestine, kidney collecting ducts, ureter, bladder, urethra and thymus but is absent in lung, blood vessels, skeletal muscle and nerves.</text>
</comment>
<comment type="PTM">
    <text>The intracellular/endo domain is disulfide-linked.</text>
</comment>
<comment type="PTM">
    <text>Prolines at the third position of the tripeptide repeating unit (G-X-Y) are hydroxylated in some or all of the chains.</text>
</comment>
<comment type="PTM">
    <text evidence="17">The ectodomain is shedded from the surface of keratinocytes resulting in a 120-kDa soluble form, also named as 120 kDa linear IgA disease antigen. The shedding is mediated by membrane-bound metalloproteases. This cleavage is inhibited by phosphorylation at Ser-544.</text>
</comment>
<comment type="disease" evidence="4 5 6 14 16">
    <disease id="DI-06341">
        <name>Epidermolysis bullosa, junctional 4, intermediate</name>
        <acronym>JEB4</acronym>
        <description>A form of epidermolysis bullosa, a genodermatosis characterized by recurrent blistering, fragility of the skin and mucosal epithelia, and erosions caused by minor mechanical trauma. JEB4 is an autosomal recessive, intermediate form in which blistering lesions occur between the epidermis and the dermis at the lamina lucida level of the basement membrane zone. In intermediate forms of junctional epidermolysis bullosa, blistering does not lead to the formation of chronic granulation tissue and does not affect the lifespan of affected individuals. Nail dystrophy and dental enamel defects are present. Scarring or non-scarring alopecia and diffuse hair loss may occur. JEB4 patients manifest blisters at birth or shortly afterward. Blisters may heal with atrophic scarring and variable hypo- or hyperpigmentation. Oral mucosa may be involved.</description>
        <dbReference type="MIM" id="619787"/>
    </disease>
    <text>The disease is caused by variants affecting the gene represented in this entry.</text>
</comment>
<comment type="disease" evidence="12">
    <disease id="DI-04534">
        <name>Epithelial recurrent erosion dystrophy</name>
        <acronym>ERED</acronym>
        <description>A corneal dystrophy characterized by recurrent episodes of epithelial erosions from childhood, with occasional impairment of vision. Most patients have attacks of redness, photophobia, epiphora, and ocular pain. Exposure to sunlight or draught, dust and smoke and lack of sleep can precipitate attacks.</description>
        <dbReference type="MIM" id="122400"/>
    </disease>
    <text>The disease is caused by variants affecting the gene represented in this entry.</text>
</comment>
<comment type="miscellaneous">
    <text>Both the 120 kDa linear IgA disease antigen and the 97 kDa linear IgA disease antigen of COL17A1, represent major antigenic targets of autoantibodies in patients with linear IgA disease (LAD). LAD is a subepidermal blistering disorder characterized by tissue-bound and circulating IgA autoantibodies to the dermal-epidermal junction. These IgA autoantibodies preferentially react with 97 and the 120 kDa forms, but not with the full-length COL17A1, suggesting that the cleavage of the ectodomain generates novel autoantigenic epitopes.</text>
</comment>
<comment type="sequence caution" evidence="18">
    <conflict type="erroneous initiation">
        <sequence resource="EMBL-CDS" id="AAA35605"/>
    </conflict>
    <text>Extended N-terminus.</text>
</comment>
<comment type="sequence caution" evidence="18">
    <conflict type="miscellaneous discrepancy">
        <sequence resource="EMBL-CDS" id="AAH04478"/>
    </conflict>
    <text>Contaminating sequence. Potential poly-A sequence.</text>
</comment>
<gene>
    <name type="primary">COL17A1</name>
    <name type="synonym">BP180</name>
    <name type="synonym">BPAG2</name>
</gene>
<name>COHA1_HUMAN</name>
<accession>Q9UMD9</accession>
<accession>Q02802</accession>
<accession>Q5JV36</accession>
<accession>Q99018</accession>
<accession>Q9NQK9</accession>
<accession>Q9UC14</accession>
<dbReference type="EMBL" id="M91669">
    <property type="protein sequence ID" value="AAA35605.1"/>
    <property type="status" value="ALT_INIT"/>
    <property type="molecule type" value="mRNA"/>
</dbReference>
<dbReference type="EMBL" id="U76604">
    <property type="protein sequence ID" value="AAB51499.1"/>
    <property type="molecule type" value="Genomic_DNA"/>
</dbReference>
<dbReference type="EMBL" id="U76565">
    <property type="protein sequence ID" value="AAB51499.1"/>
    <property type="status" value="JOINED"/>
    <property type="molecule type" value="Genomic_DNA"/>
</dbReference>
<dbReference type="EMBL" id="U76566">
    <property type="protein sequence ID" value="AAB51499.1"/>
    <property type="status" value="JOINED"/>
    <property type="molecule type" value="Genomic_DNA"/>
</dbReference>
<dbReference type="EMBL" id="U76567">
    <property type="protein sequence ID" value="AAB51499.1"/>
    <property type="status" value="JOINED"/>
    <property type="molecule type" value="Genomic_DNA"/>
</dbReference>
<dbReference type="EMBL" id="U76568">
    <property type="protein sequence ID" value="AAB51499.1"/>
    <property type="status" value="JOINED"/>
    <property type="molecule type" value="Genomic_DNA"/>
</dbReference>
<dbReference type="EMBL" id="U76569">
    <property type="protein sequence ID" value="AAB51499.1"/>
    <property type="status" value="JOINED"/>
    <property type="molecule type" value="Genomic_DNA"/>
</dbReference>
<dbReference type="EMBL" id="U76570">
    <property type="protein sequence ID" value="AAB51499.1"/>
    <property type="status" value="JOINED"/>
    <property type="molecule type" value="Genomic_DNA"/>
</dbReference>
<dbReference type="EMBL" id="U76571">
    <property type="protein sequence ID" value="AAB51499.1"/>
    <property type="status" value="JOINED"/>
    <property type="molecule type" value="Genomic_DNA"/>
</dbReference>
<dbReference type="EMBL" id="U76572">
    <property type="protein sequence ID" value="AAB51499.1"/>
    <property type="status" value="JOINED"/>
    <property type="molecule type" value="Genomic_DNA"/>
</dbReference>
<dbReference type="EMBL" id="U76573">
    <property type="protein sequence ID" value="AAB51499.1"/>
    <property type="status" value="JOINED"/>
    <property type="molecule type" value="Genomic_DNA"/>
</dbReference>
<dbReference type="EMBL" id="U76574">
    <property type="protein sequence ID" value="AAB51499.1"/>
    <property type="status" value="JOINED"/>
    <property type="molecule type" value="Genomic_DNA"/>
</dbReference>
<dbReference type="EMBL" id="U76575">
    <property type="protein sequence ID" value="AAB51499.1"/>
    <property type="status" value="JOINED"/>
    <property type="molecule type" value="Genomic_DNA"/>
</dbReference>
<dbReference type="EMBL" id="U76576">
    <property type="protein sequence ID" value="AAB51499.1"/>
    <property type="status" value="JOINED"/>
    <property type="molecule type" value="Genomic_DNA"/>
</dbReference>
<dbReference type="EMBL" id="U76577">
    <property type="protein sequence ID" value="AAB51499.1"/>
    <property type="status" value="JOINED"/>
    <property type="molecule type" value="Genomic_DNA"/>
</dbReference>
<dbReference type="EMBL" id="U76578">
    <property type="protein sequence ID" value="AAB51499.1"/>
    <property type="status" value="JOINED"/>
    <property type="molecule type" value="Genomic_DNA"/>
</dbReference>
<dbReference type="EMBL" id="U76579">
    <property type="protein sequence ID" value="AAB51499.1"/>
    <property type="status" value="JOINED"/>
    <property type="molecule type" value="Genomic_DNA"/>
</dbReference>
<dbReference type="EMBL" id="U76580">
    <property type="protein sequence ID" value="AAB51499.1"/>
    <property type="status" value="JOINED"/>
    <property type="molecule type" value="Genomic_DNA"/>
</dbReference>
<dbReference type="EMBL" id="U76581">
    <property type="protein sequence ID" value="AAB51499.1"/>
    <property type="status" value="JOINED"/>
    <property type="molecule type" value="Genomic_DNA"/>
</dbReference>
<dbReference type="EMBL" id="U76582">
    <property type="protein sequence ID" value="AAB51499.1"/>
    <property type="status" value="JOINED"/>
    <property type="molecule type" value="Genomic_DNA"/>
</dbReference>
<dbReference type="EMBL" id="U76583">
    <property type="protein sequence ID" value="AAB51499.1"/>
    <property type="status" value="JOINED"/>
    <property type="molecule type" value="Genomic_DNA"/>
</dbReference>
<dbReference type="EMBL" id="U76584">
    <property type="protein sequence ID" value="AAB51499.1"/>
    <property type="status" value="JOINED"/>
    <property type="molecule type" value="Genomic_DNA"/>
</dbReference>
<dbReference type="EMBL" id="U76585">
    <property type="protein sequence ID" value="AAB51499.1"/>
    <property type="status" value="JOINED"/>
    <property type="molecule type" value="Genomic_DNA"/>
</dbReference>
<dbReference type="EMBL" id="U76586">
    <property type="protein sequence ID" value="AAB51499.1"/>
    <property type="status" value="JOINED"/>
    <property type="molecule type" value="Genomic_DNA"/>
</dbReference>
<dbReference type="EMBL" id="U76587">
    <property type="protein sequence ID" value="AAB51499.1"/>
    <property type="status" value="JOINED"/>
    <property type="molecule type" value="Genomic_DNA"/>
</dbReference>
<dbReference type="EMBL" id="U76588">
    <property type="protein sequence ID" value="AAB51499.1"/>
    <property type="status" value="JOINED"/>
    <property type="molecule type" value="Genomic_DNA"/>
</dbReference>
<dbReference type="EMBL" id="U76589">
    <property type="protein sequence ID" value="AAB51499.1"/>
    <property type="status" value="JOINED"/>
    <property type="molecule type" value="Genomic_DNA"/>
</dbReference>
<dbReference type="EMBL" id="U76590">
    <property type="protein sequence ID" value="AAB51499.1"/>
    <property type="status" value="JOINED"/>
    <property type="molecule type" value="Genomic_DNA"/>
</dbReference>
<dbReference type="EMBL" id="U76591">
    <property type="protein sequence ID" value="AAB51499.1"/>
    <property type="status" value="JOINED"/>
    <property type="molecule type" value="Genomic_DNA"/>
</dbReference>
<dbReference type="EMBL" id="U76592">
    <property type="protein sequence ID" value="AAB51499.1"/>
    <property type="status" value="JOINED"/>
    <property type="molecule type" value="Genomic_DNA"/>
</dbReference>
<dbReference type="EMBL" id="U76593">
    <property type="protein sequence ID" value="AAB51499.1"/>
    <property type="status" value="JOINED"/>
    <property type="molecule type" value="Genomic_DNA"/>
</dbReference>
<dbReference type="EMBL" id="U76594">
    <property type="protein sequence ID" value="AAB51499.1"/>
    <property type="status" value="JOINED"/>
    <property type="molecule type" value="Genomic_DNA"/>
</dbReference>
<dbReference type="EMBL" id="U76595">
    <property type="protein sequence ID" value="AAB51499.1"/>
    <property type="status" value="JOINED"/>
    <property type="molecule type" value="Genomic_DNA"/>
</dbReference>
<dbReference type="EMBL" id="U76596">
    <property type="protein sequence ID" value="AAB51499.1"/>
    <property type="status" value="JOINED"/>
    <property type="molecule type" value="Genomic_DNA"/>
</dbReference>
<dbReference type="EMBL" id="U76597">
    <property type="protein sequence ID" value="AAB51499.1"/>
    <property type="status" value="JOINED"/>
    <property type="molecule type" value="Genomic_DNA"/>
</dbReference>
<dbReference type="EMBL" id="U76598">
    <property type="protein sequence ID" value="AAB51499.1"/>
    <property type="status" value="JOINED"/>
    <property type="molecule type" value="Genomic_DNA"/>
</dbReference>
<dbReference type="EMBL" id="U76599">
    <property type="protein sequence ID" value="AAB51499.1"/>
    <property type="status" value="JOINED"/>
    <property type="molecule type" value="Genomic_DNA"/>
</dbReference>
<dbReference type="EMBL" id="U76600">
    <property type="protein sequence ID" value="AAB51499.1"/>
    <property type="status" value="JOINED"/>
    <property type="molecule type" value="Genomic_DNA"/>
</dbReference>
<dbReference type="EMBL" id="U76601">
    <property type="protein sequence ID" value="AAB51499.1"/>
    <property type="status" value="JOINED"/>
    <property type="molecule type" value="Genomic_DNA"/>
</dbReference>
<dbReference type="EMBL" id="U76602">
    <property type="protein sequence ID" value="AAB51499.1"/>
    <property type="status" value="JOINED"/>
    <property type="molecule type" value="Genomic_DNA"/>
</dbReference>
<dbReference type="EMBL" id="U76603">
    <property type="protein sequence ID" value="AAB51499.1"/>
    <property type="status" value="JOINED"/>
    <property type="molecule type" value="Genomic_DNA"/>
</dbReference>
<dbReference type="EMBL" id="AL138761">
    <property type="status" value="NOT_ANNOTATED_CDS"/>
    <property type="molecule type" value="Genomic_DNA"/>
</dbReference>
<dbReference type="EMBL" id="BC004478">
    <property type="protein sequence ID" value="AAH04478.1"/>
    <property type="status" value="ALT_SEQ"/>
    <property type="molecule type" value="mRNA"/>
</dbReference>
<dbReference type="EMBL" id="M63730">
    <property type="protein sequence ID" value="AAA51839.1"/>
    <property type="molecule type" value="mRNA"/>
</dbReference>
<dbReference type="CCDS" id="CCDS7554.1">
    <molecule id="Q9UMD9-1"/>
</dbReference>
<dbReference type="PIR" id="I56325">
    <property type="entry name" value="A61262"/>
</dbReference>
<dbReference type="RefSeq" id="NP_000485.3">
    <molecule id="Q9UMD9-1"/>
    <property type="nucleotide sequence ID" value="NM_000494.3"/>
</dbReference>
<dbReference type="PDB" id="8IZS">
    <property type="method" value="X-ray"/>
    <property type="resolution" value="1.53 A"/>
    <property type="chains" value="A/B/C/D/E/F=717-743"/>
</dbReference>
<dbReference type="PDBsum" id="8IZS"/>
<dbReference type="SMR" id="Q9UMD9"/>
<dbReference type="BioGRID" id="107704">
    <property type="interactions" value="34"/>
</dbReference>
<dbReference type="ComplexPortal" id="CPX-1758">
    <property type="entry name" value="Collagen type XVII trimer"/>
</dbReference>
<dbReference type="FunCoup" id="Q9UMD9">
    <property type="interactions" value="175"/>
</dbReference>
<dbReference type="IntAct" id="Q9UMD9">
    <property type="interactions" value="13"/>
</dbReference>
<dbReference type="MINT" id="Q9UMD9"/>
<dbReference type="STRING" id="9606.ENSP00000497653"/>
<dbReference type="Allergome" id="8213">
    <property type="allergen name" value="Hom s BP180"/>
</dbReference>
<dbReference type="GlyCosmos" id="Q9UMD9">
    <property type="glycosylation" value="1 site, No reported glycans"/>
</dbReference>
<dbReference type="GlyGen" id="Q9UMD9">
    <property type="glycosylation" value="8 sites, 2 O-linked glycans (5 sites)"/>
</dbReference>
<dbReference type="iPTMnet" id="Q9UMD9"/>
<dbReference type="PhosphoSitePlus" id="Q9UMD9"/>
<dbReference type="SwissPalm" id="Q9UMD9"/>
<dbReference type="BioMuta" id="COL17A1"/>
<dbReference type="DMDM" id="146345399"/>
<dbReference type="jPOST" id="Q9UMD9"/>
<dbReference type="MassIVE" id="Q9UMD9"/>
<dbReference type="PaxDb" id="9606-ENSP00000340937"/>
<dbReference type="PeptideAtlas" id="Q9UMD9"/>
<dbReference type="ProteomicsDB" id="85187">
    <molecule id="Q9UMD9-1"/>
</dbReference>
<dbReference type="ProteomicsDB" id="85188">
    <molecule id="Q9UMD9-2"/>
</dbReference>
<dbReference type="Antibodypedia" id="18201">
    <property type="antibodies" value="234 antibodies from 29 providers"/>
</dbReference>
<dbReference type="DNASU" id="1308"/>
<dbReference type="Ensembl" id="ENST00000369733.8">
    <molecule id="Q9UMD9-2"/>
    <property type="protein sequence ID" value="ENSP00000358748.3"/>
    <property type="gene ID" value="ENSG00000065618.21"/>
</dbReference>
<dbReference type="Ensembl" id="ENST00000648076.2">
    <molecule id="Q9UMD9-1"/>
    <property type="protein sequence ID" value="ENSP00000497653.1"/>
    <property type="gene ID" value="ENSG00000065618.21"/>
</dbReference>
<dbReference type="GeneID" id="1308"/>
<dbReference type="KEGG" id="hsa:1308"/>
<dbReference type="MANE-Select" id="ENST00000648076.2">
    <property type="protein sequence ID" value="ENSP00000497653.1"/>
    <property type="RefSeq nucleotide sequence ID" value="NM_000494.4"/>
    <property type="RefSeq protein sequence ID" value="NP_000485.3"/>
</dbReference>
<dbReference type="UCSC" id="uc001kxr.4">
    <molecule id="Q9UMD9-1"/>
    <property type="organism name" value="human"/>
</dbReference>
<dbReference type="AGR" id="HGNC:2194"/>
<dbReference type="CTD" id="1308"/>
<dbReference type="DisGeNET" id="1308"/>
<dbReference type="GeneCards" id="COL17A1"/>
<dbReference type="GeneReviews" id="COL17A1"/>
<dbReference type="HGNC" id="HGNC:2194">
    <property type="gene designation" value="COL17A1"/>
</dbReference>
<dbReference type="HPA" id="ENSG00000065618">
    <property type="expression patterns" value="Tissue enriched (skin)"/>
</dbReference>
<dbReference type="MalaCards" id="COL17A1"/>
<dbReference type="MIM" id="113811">
    <property type="type" value="gene"/>
</dbReference>
<dbReference type="MIM" id="122400">
    <property type="type" value="phenotype"/>
</dbReference>
<dbReference type="MIM" id="619787">
    <property type="type" value="phenotype"/>
</dbReference>
<dbReference type="neXtProt" id="NX_Q9UMD9"/>
<dbReference type="OpenTargets" id="ENSG00000065618"/>
<dbReference type="Orphanet" id="293381">
    <property type="disease" value="Epithelial recurrent erosion dystrophy"/>
</dbReference>
<dbReference type="Orphanet" id="79402">
    <property type="disease" value="Intermediate generalized junctional epidermolysis bullosa"/>
</dbReference>
<dbReference type="Orphanet" id="79406">
    <property type="disease" value="Late-onset junctional epidermolysis bullosa"/>
</dbReference>
<dbReference type="Orphanet" id="251393">
    <property type="disease" value="Localized junctional epidermolysis bullosa"/>
</dbReference>
<dbReference type="PharmGKB" id="PA26710"/>
<dbReference type="VEuPathDB" id="HostDB:ENSG00000065618"/>
<dbReference type="eggNOG" id="KOG3544">
    <property type="taxonomic scope" value="Eukaryota"/>
</dbReference>
<dbReference type="GeneTree" id="ENSGT00940000161242"/>
<dbReference type="HOGENOM" id="CLU_004285_0_0_1"/>
<dbReference type="InParanoid" id="Q9UMD9"/>
<dbReference type="OMA" id="YRQTQSP"/>
<dbReference type="OrthoDB" id="9950082at2759"/>
<dbReference type="PAN-GO" id="Q9UMD9">
    <property type="GO annotations" value="5 GO annotations based on evolutionary models"/>
</dbReference>
<dbReference type="PhylomeDB" id="Q9UMD9"/>
<dbReference type="TreeFam" id="TF332289"/>
<dbReference type="PathwayCommons" id="Q9UMD9"/>
<dbReference type="Reactome" id="R-HSA-1442490">
    <property type="pathway name" value="Collagen degradation"/>
</dbReference>
<dbReference type="Reactome" id="R-HSA-1650814">
    <property type="pathway name" value="Collagen biosynthesis and modifying enzymes"/>
</dbReference>
<dbReference type="Reactome" id="R-HSA-198933">
    <property type="pathway name" value="Immunoregulatory interactions between a Lymphoid and a non-Lymphoid cell"/>
</dbReference>
<dbReference type="Reactome" id="R-HSA-2022090">
    <property type="pathway name" value="Assembly of collagen fibrils and other multimeric structures"/>
</dbReference>
<dbReference type="Reactome" id="R-HSA-446107">
    <property type="pathway name" value="Type I hemidesmosome assembly"/>
</dbReference>
<dbReference type="Reactome" id="R-HSA-8948216">
    <property type="pathway name" value="Collagen chain trimerization"/>
</dbReference>
<dbReference type="SignaLink" id="Q9UMD9"/>
<dbReference type="BioGRID-ORCS" id="1308">
    <property type="hits" value="25 hits in 1152 CRISPR screens"/>
</dbReference>
<dbReference type="ChiTaRS" id="COL17A1">
    <property type="organism name" value="human"/>
</dbReference>
<dbReference type="GeneWiki" id="Collagen,_type_XVII,_alpha_1"/>
<dbReference type="GenomeRNAi" id="1308"/>
<dbReference type="Pharos" id="Q9UMD9">
    <property type="development level" value="Tbio"/>
</dbReference>
<dbReference type="PRO" id="PR:Q9UMD9"/>
<dbReference type="Proteomes" id="UP000005640">
    <property type="component" value="Chromosome 10"/>
</dbReference>
<dbReference type="RNAct" id="Q9UMD9">
    <property type="molecule type" value="protein"/>
</dbReference>
<dbReference type="Bgee" id="ENSG00000065618">
    <property type="expression patterns" value="Expressed in skin of abdomen and 114 other cell types or tissues"/>
</dbReference>
<dbReference type="ExpressionAtlas" id="Q9UMD9">
    <property type="expression patterns" value="baseline and differential"/>
</dbReference>
<dbReference type="GO" id="GO:0005604">
    <property type="term" value="C:basement membrane"/>
    <property type="evidence" value="ECO:0007669"/>
    <property type="project" value="UniProtKB-SubCell"/>
</dbReference>
<dbReference type="GO" id="GO:0005911">
    <property type="term" value="C:cell-cell junction"/>
    <property type="evidence" value="ECO:0000304"/>
    <property type="project" value="ProtInc"/>
</dbReference>
<dbReference type="GO" id="GO:0005581">
    <property type="term" value="C:collagen trimer"/>
    <property type="evidence" value="ECO:0007669"/>
    <property type="project" value="UniProtKB-KW"/>
</dbReference>
<dbReference type="GO" id="GO:0062023">
    <property type="term" value="C:collagen-containing extracellular matrix"/>
    <property type="evidence" value="ECO:0007005"/>
    <property type="project" value="BHF-UCL"/>
</dbReference>
<dbReference type="GO" id="GO:0005788">
    <property type="term" value="C:endoplasmic reticulum lumen"/>
    <property type="evidence" value="ECO:0000304"/>
    <property type="project" value="Reactome"/>
</dbReference>
<dbReference type="GO" id="GO:0005576">
    <property type="term" value="C:extracellular region"/>
    <property type="evidence" value="ECO:0000304"/>
    <property type="project" value="Reactome"/>
</dbReference>
<dbReference type="GO" id="GO:0005615">
    <property type="term" value="C:extracellular space"/>
    <property type="evidence" value="ECO:0000318"/>
    <property type="project" value="GO_Central"/>
</dbReference>
<dbReference type="GO" id="GO:0030056">
    <property type="term" value="C:hemidesmosome"/>
    <property type="evidence" value="ECO:0000314"/>
    <property type="project" value="UniProtKB"/>
</dbReference>
<dbReference type="GO" id="GO:0005886">
    <property type="term" value="C:plasma membrane"/>
    <property type="evidence" value="ECO:0000304"/>
    <property type="project" value="Reactome"/>
</dbReference>
<dbReference type="GO" id="GO:0030020">
    <property type="term" value="F:extracellular matrix structural constituent conferring tensile strength"/>
    <property type="evidence" value="ECO:0007005"/>
    <property type="project" value="BHF-UCL"/>
</dbReference>
<dbReference type="GO" id="GO:0007160">
    <property type="term" value="P:cell-matrix adhesion"/>
    <property type="evidence" value="ECO:0000304"/>
    <property type="project" value="ProtInc"/>
</dbReference>
<dbReference type="GO" id="GO:0008544">
    <property type="term" value="P:epidermis development"/>
    <property type="evidence" value="ECO:0000304"/>
    <property type="project" value="ProtInc"/>
</dbReference>
<dbReference type="GO" id="GO:0031581">
    <property type="term" value="P:hemidesmosome assembly"/>
    <property type="evidence" value="ECO:0000314"/>
    <property type="project" value="UniProtKB"/>
</dbReference>
<dbReference type="FunFam" id="1.20.5.320:FF:000009">
    <property type="entry name" value="Collagen alpha-1(XVII) chain"/>
    <property type="match status" value="1"/>
</dbReference>
<dbReference type="FunFam" id="1.20.5.320:FF:000003">
    <property type="entry name" value="Collagen, type XVII, alpha 1"/>
    <property type="match status" value="1"/>
</dbReference>
<dbReference type="Gene3D" id="1.20.5.320">
    <property type="entry name" value="6-Phosphogluconate Dehydrogenase, domain 3"/>
    <property type="match status" value="1"/>
</dbReference>
<dbReference type="InterPro" id="IPR008160">
    <property type="entry name" value="Collagen"/>
</dbReference>
<dbReference type="InterPro" id="IPR050149">
    <property type="entry name" value="Collagen_superfamily"/>
</dbReference>
<dbReference type="PANTHER" id="PTHR24023">
    <property type="entry name" value="COLLAGEN ALPHA"/>
    <property type="match status" value="1"/>
</dbReference>
<dbReference type="PANTHER" id="PTHR24023:SF1082">
    <property type="entry name" value="COLLAGEN TRIPLE HELIX REPEAT"/>
    <property type="match status" value="1"/>
</dbReference>
<dbReference type="Pfam" id="PF01391">
    <property type="entry name" value="Collagen"/>
    <property type="match status" value="3"/>
</dbReference>
<evidence type="ECO:0000255" key="1"/>
<evidence type="ECO:0000256" key="2">
    <source>
        <dbReference type="SAM" id="MobiDB-lite"/>
    </source>
</evidence>
<evidence type="ECO:0000269" key="3">
    <source>
    </source>
</evidence>
<evidence type="ECO:0000269" key="4">
    <source>
    </source>
</evidence>
<evidence type="ECO:0000269" key="5">
    <source>
    </source>
</evidence>
<evidence type="ECO:0000269" key="6">
    <source>
    </source>
</evidence>
<evidence type="ECO:0000269" key="7">
    <source>
    </source>
</evidence>
<evidence type="ECO:0000269" key="8">
    <source>
    </source>
</evidence>
<evidence type="ECO:0000269" key="9">
    <source>
    </source>
</evidence>
<evidence type="ECO:0000269" key="10">
    <source>
    </source>
</evidence>
<evidence type="ECO:0000269" key="11">
    <source>
    </source>
</evidence>
<evidence type="ECO:0000269" key="12">
    <source>
    </source>
</evidence>
<evidence type="ECO:0000269" key="13">
    <source>
    </source>
</evidence>
<evidence type="ECO:0000269" key="14">
    <source>
    </source>
</evidence>
<evidence type="ECO:0000269" key="15">
    <source>
    </source>
</evidence>
<evidence type="ECO:0000269" key="16">
    <source>
    </source>
</evidence>
<evidence type="ECO:0000269" key="17">
    <source>
    </source>
</evidence>
<evidence type="ECO:0000305" key="18"/>
<proteinExistence type="evidence at protein level"/>
<protein>
    <recommendedName>
        <fullName>Collagen alpha-1(XVII) chain</fullName>
    </recommendedName>
    <alternativeName>
        <fullName>180 kDa bullous pemphigoid antigen 2</fullName>
    </alternativeName>
    <alternativeName>
        <fullName>Bullous pemphigoid antigen 2</fullName>
    </alternativeName>
    <component>
        <recommendedName>
            <fullName>120 kDa linear IgA disease antigen</fullName>
        </recommendedName>
        <alternativeName>
            <fullName>120 kDa linear IgA dermatosis antigen</fullName>
        </alternativeName>
        <alternativeName>
            <fullName>Linear IgA disease antigen 1</fullName>
            <shortName>LAD-1</shortName>
        </alternativeName>
    </component>
    <component>
        <recommendedName>
            <fullName>97 kDa linear IgA disease antigen</fullName>
        </recommendedName>
        <alternativeName>
            <fullName>97 kDa linear IgA bullous dermatosis antigen</fullName>
            <shortName>97 kDa LAD antigen</shortName>
            <shortName>97-LAD</shortName>
        </alternativeName>
        <alternativeName>
            <fullName>Linear IgA bullous disease antigen of 97 kDa</fullName>
            <shortName>LABD97</shortName>
        </alternativeName>
    </component>
</protein>
<sequence>MDVTKKNKRDGTEVTERIVTETVTTRLTSLPPKGGTSNGYAKTASLGGGSRLEKQSLTHGSSGYINSTGSTRGHASTSSYRRAHSPASTLPNSPGSTFERKTHVTRHAYEGSSSGNSSPEYPRKEFASSSTRGRSQTRESEIRVRLQSASPSTRWTELDDVKRLLKGSRSASVSPTRNSSNTLPIPKKGTVETKIVTASSQSVSGTYDATILDANLPSHVWSSTLPAGSSMGTYHNNMTTQSSSLLNTNAYSAGSVFGVPNNMASCSPTLHPGLSTSSSVFGMQNNLAPSLTTLSHGTTTTSTAYGVKKNMPQSPAAVNTGVSTSAACTTSVQSDDLLHKDCKFLILEKDNTPAKKEMELLIMTKDSGKVFTASPASIAATSFSEDTLKKEKQAAYNADSGLKAEANGDLKTVSTKGKTTTADIHSYGSSGGGGSGGGGGVGGAGGGPWGPAPAWCPCGSCCSWWKWLLGLLLTWLLLLGLLFGLIALAEEVRKLKARVDELERIRRSILPYGDSMDRIEKDRLQGMAPAAGADLDKIGLHSDSQEELWMFVRKKLMMEQENGNLRGSPGPKGDMGSPGPKGDRGFPGTPGIPGPLGHPGPQGPKGQKGSVGDPGMEGPMGQRGREGPMGPRGEAGPPGSGEKGERGAAGEPGPHGPPGVPGSVGPKGSSGSPGPQGPPGPVGLQGLRGEVGLPGVKGDKGPMGPPGPKGDQGEKGPRGLTGEPGMRGLPGAVGEPGAKGAMGPAGPDGHQGPRGEQGLTGMPGIRGPPGPSGDPGKPGLTGPQGPQGLPGTPGRPGIKGEPGAPGKIVTSEGSSMLTVPGPPGPPGAMGPPGPPGAPGPAGPAGLPGHQEVLNLQGPPGPPGPRGPPGPSIPGPPGPRGPPGEGLPGPPGPPGSFLSNSETFLSGPPGPPGPPGPKGDQGPPGPRGHQGEQGLPGFSTSGSSSFGLNLQGPPGPPGPQGPKGDKGDPGVPGALGIPSGPSEGGSSSTMYVSGPPGPPGPPGPPGSISSSGQEIQQYISEYMQSDSIRSYLSGVQGPPGPPGPPGPVTTITGETFDYSELASHVVSYLRTSGYGVSLFSSSISSEDILAVLQRDDVRQYLRQYLMGPRGPPGPPGASGDGSLLSLDYAELSSRILSYMSSSGISIGLPGPPGPPGLPGTSYEELLSLLRGSEFRGIVGPPGPPGPPGIPGNVWSSISVEDLSSYLHTAGLSFIPGPPGPPGPPGPRGPPGVSGALATYAAENSDSFRSELISYLTSPDVRSFIVGPPGPPGPQGPPGDSRLLSTDASHSRGSSSSSHSSSVRRGSSYSSSMSTGGGGAGSLGAGGAFGEAAGDRGPYGTDIGPGGGYGAAAEGGMYAGNGGLLGADFAGDLDYNELAVRVSESMQRQGLLQGMAYTVQGPPGQPGPQGPPGISKVFSAYSNVTADLMDFFQTYGAIQGPPGQKGEMGTPGPKGDRGPAGPPGHPGPPGPRGHKGEKGDKGDQVYAGRRRRRSIAVKP</sequence>
<feature type="chain" id="PRO_0000059406" description="Collagen alpha-1(XVII) chain">
    <location>
        <begin position="1"/>
        <end position="1497"/>
    </location>
</feature>
<feature type="chain" id="PRO_0000342555" description="120 kDa linear IgA disease antigen">
    <location>
        <begin position="524"/>
        <end position="1497"/>
    </location>
</feature>
<feature type="chain" id="PRO_0000342556" description="97 kDa linear IgA disease antigen">
    <location>
        <begin position="531"/>
        <end status="unknown"/>
    </location>
</feature>
<feature type="topological domain" description="Cytoplasmic" evidence="1">
    <location>
        <begin position="1"/>
        <end position="467"/>
    </location>
</feature>
<feature type="transmembrane region" description="Helical; Signal-anchor for type II membrane protein" evidence="1">
    <location>
        <begin position="468"/>
        <end position="488"/>
    </location>
</feature>
<feature type="topological domain" description="Extracellular" evidence="1">
    <location>
        <begin position="489"/>
        <end position="1497"/>
    </location>
</feature>
<feature type="region of interest" description="Nonhelical region (NC16)">
    <location>
        <begin position="1"/>
        <end position="566"/>
    </location>
</feature>
<feature type="region of interest" description="Disordered" evidence="2">
    <location>
        <begin position="1"/>
        <end position="154"/>
    </location>
</feature>
<feature type="region of interest" description="Necessary for interaction with DST and for the recruitment of DST to hemidesmosome" evidence="7">
    <location>
        <begin position="145"/>
        <end position="230"/>
    </location>
</feature>
<feature type="region of interest" description="Disordered" evidence="2">
    <location>
        <begin position="167"/>
        <end position="186"/>
    </location>
</feature>
<feature type="region of interest" description="Disordered" evidence="2">
    <location>
        <begin position="562"/>
        <end position="1011"/>
    </location>
</feature>
<feature type="region of interest" description="Triple-helical region">
    <location>
        <begin position="567"/>
        <end position="1482"/>
    </location>
</feature>
<feature type="region of interest" description="Disordered" evidence="2">
    <location>
        <begin position="1209"/>
        <end position="1234"/>
    </location>
</feature>
<feature type="region of interest" description="Disordered" evidence="2">
    <location>
        <begin position="1261"/>
        <end position="1316"/>
    </location>
</feature>
<feature type="region of interest" description="Disordered" evidence="2">
    <location>
        <begin position="1434"/>
        <end position="1497"/>
    </location>
</feature>
<feature type="region of interest" description="Nonhelical region (NC1)">
    <location>
        <begin position="1483"/>
        <end position="1497"/>
    </location>
</feature>
<feature type="compositionally biased region" description="Basic and acidic residues" evidence="2">
    <location>
        <begin position="9"/>
        <end position="19"/>
    </location>
</feature>
<feature type="compositionally biased region" description="Polar residues" evidence="2">
    <location>
        <begin position="57"/>
        <end position="96"/>
    </location>
</feature>
<feature type="compositionally biased region" description="Polar residues" evidence="2">
    <location>
        <begin position="169"/>
        <end position="183"/>
    </location>
</feature>
<feature type="compositionally biased region" description="Pro residues" evidence="2">
    <location>
        <begin position="590"/>
        <end position="602"/>
    </location>
</feature>
<feature type="compositionally biased region" description="Low complexity" evidence="2">
    <location>
        <begin position="604"/>
        <end position="635"/>
    </location>
</feature>
<feature type="compositionally biased region" description="Low complexity" evidence="2">
    <location>
        <begin position="661"/>
        <end position="673"/>
    </location>
</feature>
<feature type="compositionally biased region" description="Low complexity" evidence="2">
    <location>
        <begin position="735"/>
        <end position="748"/>
    </location>
</feature>
<feature type="compositionally biased region" description="Low complexity" evidence="2">
    <location>
        <begin position="774"/>
        <end position="796"/>
    </location>
</feature>
<feature type="compositionally biased region" description="Pro residues" evidence="2">
    <location>
        <begin position="820"/>
        <end position="841"/>
    </location>
</feature>
<feature type="compositionally biased region" description="Pro residues" evidence="2">
    <location>
        <begin position="858"/>
        <end position="881"/>
    </location>
</feature>
<feature type="compositionally biased region" description="Pro residues" evidence="2">
    <location>
        <begin position="907"/>
        <end position="916"/>
    </location>
</feature>
<feature type="compositionally biased region" description="Low complexity" evidence="2">
    <location>
        <begin position="936"/>
        <end position="946"/>
    </location>
</feature>
<feature type="compositionally biased region" description="Low complexity" evidence="2">
    <location>
        <begin position="968"/>
        <end position="987"/>
    </location>
</feature>
<feature type="compositionally biased region" description="Pro residues" evidence="2">
    <location>
        <begin position="994"/>
        <end position="1004"/>
    </location>
</feature>
<feature type="compositionally biased region" description="Pro residues" evidence="2">
    <location>
        <begin position="1214"/>
        <end position="1228"/>
    </location>
</feature>
<feature type="compositionally biased region" description="Pro residues" evidence="2">
    <location>
        <begin position="1266"/>
        <end position="1275"/>
    </location>
</feature>
<feature type="compositionally biased region" description="Low complexity" evidence="2">
    <location>
        <begin position="1289"/>
        <end position="1312"/>
    </location>
</feature>
<feature type="compositionally biased region" description="Pro residues" evidence="2">
    <location>
        <begin position="1458"/>
        <end position="1469"/>
    </location>
</feature>
<feature type="compositionally biased region" description="Basic and acidic residues" evidence="2">
    <location>
        <begin position="1472"/>
        <end position="1481"/>
    </location>
</feature>
<feature type="compositionally biased region" description="Basic residues" evidence="2">
    <location>
        <begin position="1486"/>
        <end position="1497"/>
    </location>
</feature>
<feature type="modified residue" description="Phosphoserine; by CK2" evidence="11">
    <location>
        <position position="544"/>
    </location>
</feature>
<feature type="glycosylation site" description="N-linked (GlcNAc...) asparagine" evidence="17">
    <location>
        <position position="1421"/>
    </location>
</feature>
<feature type="splice variant" id="VSP_024940" description="In isoform 2." evidence="18">
    <location>
        <begin position="922"/>
        <end position="966"/>
    </location>
</feature>
<feature type="splice variant" id="VSP_024941" description="In isoform 2." evidence="18">
    <original>GSEFRGIVGPPGPPGPPGIPGNVWSSISVEDLSSYLHT</original>
    <variation>A</variation>
    <location>
        <begin position="1170"/>
        <end position="1207"/>
    </location>
</feature>
<feature type="sequence variant" id="VAR_048781" description="In dbSNP:rs17116471.">
    <original>T</original>
    <variation>A</variation>
    <location>
        <position position="4"/>
    </location>
</feature>
<feature type="sequence variant" id="VAR_017593" description="In dbSNP:rs805708." evidence="9">
    <original>T</original>
    <variation>M</variation>
    <location>
        <position position="210"/>
    </location>
</feature>
<feature type="sequence variant" id="VAR_017594" description="In dbSNP:rs1054113." evidence="6 15">
    <original>M</original>
    <variation>I</variation>
    <location>
        <position position="231"/>
    </location>
</feature>
<feature type="sequence variant" id="VAR_017595" evidence="15">
    <original>M</original>
    <variation>T</variation>
    <location>
        <position position="238"/>
    </location>
</feature>
<feature type="sequence variant" id="VAR_017596" description="In JEB4." evidence="6">
    <original>S</original>
    <variation>C</variation>
    <location>
        <position position="265"/>
    </location>
</feature>
<feature type="sequence variant" id="VAR_017597" description="In dbSNP:rs805698." evidence="8 15">
    <original>G</original>
    <variation>S</variation>
    <location>
        <position position="428"/>
    </location>
</feature>
<feature type="sequence variant" id="VAR_017598" description="In JEB4." evidence="4 14">
    <original>G</original>
    <variation>V</variation>
    <location>
        <position position="627"/>
    </location>
</feature>
<feature type="sequence variant" id="VAR_017599" description="In JEB4; dbSNP:rs121912773." evidence="5">
    <original>G</original>
    <variation>D</variation>
    <location>
        <position position="633"/>
    </location>
</feature>
<feature type="sequence variant" id="VAR_017600" description="In dbSNP:rs805722." evidence="15">
    <original>M</original>
    <variation>V</variation>
    <location>
        <position position="703"/>
    </location>
</feature>
<feature type="sequence variant" id="VAR_074627" description="In ERED; dbSNP:rs797045142." evidence="12">
    <original>T</original>
    <variation>I</variation>
    <location>
        <position position="939"/>
    </location>
</feature>
<feature type="sequence variant" id="VAR_017601" description="In JEB4; dbSNP:rs121912771." evidence="16">
    <original>R</original>
    <variation>Q</variation>
    <location>
        <position position="1303"/>
    </location>
</feature>
<feature type="sequence variant" id="VAR_017602" description="In dbSNP:rs17116350." evidence="15">
    <original>D</original>
    <variation>G</variation>
    <location>
        <position position="1370"/>
    </location>
</feature>
<feature type="sequence conflict" description="In Ref. 5; AAA51839." evidence="18" ref="5">
    <original>Q</original>
    <variation>P</variation>
    <location>
        <position position="856"/>
    </location>
</feature>
<feature type="sequence conflict" description="In Ref. 1; AAA35605 and 2; AAB51499." evidence="18" ref="1 2">
    <original>S</original>
    <variation>F</variation>
    <location>
        <position position="905"/>
    </location>
</feature>
<organism>
    <name type="scientific">Homo sapiens</name>
    <name type="common">Human</name>
    <dbReference type="NCBI Taxonomy" id="9606"/>
    <lineage>
        <taxon>Eukaryota</taxon>
        <taxon>Metazoa</taxon>
        <taxon>Chordata</taxon>
        <taxon>Craniata</taxon>
        <taxon>Vertebrata</taxon>
        <taxon>Euteleostomi</taxon>
        <taxon>Mammalia</taxon>
        <taxon>Eutheria</taxon>
        <taxon>Euarchontoglires</taxon>
        <taxon>Primates</taxon>
        <taxon>Haplorrhini</taxon>
        <taxon>Catarrhini</taxon>
        <taxon>Hominidae</taxon>
        <taxon>Homo</taxon>
    </lineage>
</organism>